<comment type="function">
    <text evidence="1">Heme-dependent dioxygenase that catalyzes the oxidative cleavage of the L-tryptophan (L-Trp) pyrrole ring and converts L-tryptophan to N-formyl-L-kynurenine. Catalyzes the oxidative cleavage of the indole moiety.</text>
</comment>
<comment type="catalytic activity">
    <reaction evidence="1">
        <text>L-tryptophan + O2 = N-formyl-L-kynurenine</text>
        <dbReference type="Rhea" id="RHEA:24536"/>
        <dbReference type="ChEBI" id="CHEBI:15379"/>
        <dbReference type="ChEBI" id="CHEBI:57912"/>
        <dbReference type="ChEBI" id="CHEBI:58629"/>
        <dbReference type="EC" id="1.13.11.11"/>
    </reaction>
</comment>
<comment type="cofactor">
    <cofactor evidence="1">
        <name>heme</name>
        <dbReference type="ChEBI" id="CHEBI:30413"/>
    </cofactor>
    <text evidence="1">Binds 1 heme group per subunit.</text>
</comment>
<comment type="pathway">
    <text evidence="1">Amino-acid degradation; L-tryptophan degradation via kynurenine pathway; L-kynurenine from L-tryptophan: step 1/2.</text>
</comment>
<comment type="subunit">
    <text evidence="1">Homotetramer.</text>
</comment>
<comment type="similarity">
    <text evidence="1">Belongs to the tryptophan 2,3-dioxygenase family.</text>
</comment>
<evidence type="ECO:0000255" key="1">
    <source>
        <dbReference type="HAMAP-Rule" id="MF_01972"/>
    </source>
</evidence>
<dbReference type="EC" id="1.13.11.11" evidence="1"/>
<dbReference type="EMBL" id="CP000454">
    <property type="protein sequence ID" value="ABK02825.1"/>
    <property type="molecule type" value="Genomic_DNA"/>
</dbReference>
<dbReference type="RefSeq" id="WP_011691292.1">
    <property type="nucleotide sequence ID" value="NC_008541.1"/>
</dbReference>
<dbReference type="SMR" id="A0JUV5"/>
<dbReference type="STRING" id="290399.Arth_1431"/>
<dbReference type="KEGG" id="art:Arth_1431"/>
<dbReference type="eggNOG" id="COG3483">
    <property type="taxonomic scope" value="Bacteria"/>
</dbReference>
<dbReference type="HOGENOM" id="CLU_063240_0_0_11"/>
<dbReference type="OrthoDB" id="9776847at2"/>
<dbReference type="UniPathway" id="UPA00333">
    <property type="reaction ID" value="UER00453"/>
</dbReference>
<dbReference type="Proteomes" id="UP000000754">
    <property type="component" value="Chromosome"/>
</dbReference>
<dbReference type="GO" id="GO:0020037">
    <property type="term" value="F:heme binding"/>
    <property type="evidence" value="ECO:0000250"/>
    <property type="project" value="UniProtKB"/>
</dbReference>
<dbReference type="GO" id="GO:0046872">
    <property type="term" value="F:metal ion binding"/>
    <property type="evidence" value="ECO:0007669"/>
    <property type="project" value="UniProtKB-KW"/>
</dbReference>
<dbReference type="GO" id="GO:0004833">
    <property type="term" value="F:tryptophan 2,3-dioxygenase activity"/>
    <property type="evidence" value="ECO:0000250"/>
    <property type="project" value="UniProtKB"/>
</dbReference>
<dbReference type="GO" id="GO:0019442">
    <property type="term" value="P:L-tryptophan catabolic process to acetyl-CoA"/>
    <property type="evidence" value="ECO:0007669"/>
    <property type="project" value="TreeGrafter"/>
</dbReference>
<dbReference type="GO" id="GO:0019441">
    <property type="term" value="P:L-tryptophan catabolic process to kynurenine"/>
    <property type="evidence" value="ECO:0000250"/>
    <property type="project" value="UniProtKB"/>
</dbReference>
<dbReference type="FunFam" id="1.20.58.480:FF:000001">
    <property type="entry name" value="Tryptophan 2,3-dioxygenase"/>
    <property type="match status" value="1"/>
</dbReference>
<dbReference type="Gene3D" id="1.20.58.480">
    <property type="match status" value="1"/>
</dbReference>
<dbReference type="HAMAP" id="MF_01972">
    <property type="entry name" value="T23O"/>
    <property type="match status" value="1"/>
</dbReference>
<dbReference type="InterPro" id="IPR037217">
    <property type="entry name" value="Trp/Indoleamine_2_3_dOase-like"/>
</dbReference>
<dbReference type="InterPro" id="IPR017485">
    <property type="entry name" value="Trp_2-3-dOase_bac"/>
</dbReference>
<dbReference type="InterPro" id="IPR004981">
    <property type="entry name" value="Trp_2_3_dOase"/>
</dbReference>
<dbReference type="NCBIfam" id="TIGR03036">
    <property type="entry name" value="trp_2_3_diox"/>
    <property type="match status" value="1"/>
</dbReference>
<dbReference type="PANTHER" id="PTHR10138">
    <property type="entry name" value="TRYPTOPHAN 2,3-DIOXYGENASE"/>
    <property type="match status" value="1"/>
</dbReference>
<dbReference type="PANTHER" id="PTHR10138:SF0">
    <property type="entry name" value="TRYPTOPHAN 2,3-DIOXYGENASE"/>
    <property type="match status" value="1"/>
</dbReference>
<dbReference type="Pfam" id="PF03301">
    <property type="entry name" value="Trp_dioxygenase"/>
    <property type="match status" value="2"/>
</dbReference>
<dbReference type="SUPFAM" id="SSF140959">
    <property type="entry name" value="Indolic compounds 2,3-dioxygenase-like"/>
    <property type="match status" value="1"/>
</dbReference>
<organism>
    <name type="scientific">Arthrobacter sp. (strain FB24)</name>
    <dbReference type="NCBI Taxonomy" id="290399"/>
    <lineage>
        <taxon>Bacteria</taxon>
        <taxon>Bacillati</taxon>
        <taxon>Actinomycetota</taxon>
        <taxon>Actinomycetes</taxon>
        <taxon>Micrococcales</taxon>
        <taxon>Micrococcaceae</taxon>
        <taxon>Arthrobacter</taxon>
    </lineage>
</organism>
<feature type="chain" id="PRO_0000360082" description="Tryptophan 2,3-dioxygenase">
    <location>
        <begin position="1"/>
        <end position="284"/>
    </location>
</feature>
<feature type="binding site" evidence="1">
    <location>
        <begin position="51"/>
        <end position="55"/>
    </location>
    <ligand>
        <name>substrate</name>
    </ligand>
</feature>
<feature type="binding site" evidence="1">
    <location>
        <position position="113"/>
    </location>
    <ligand>
        <name>substrate</name>
    </ligand>
</feature>
<feature type="binding site" evidence="1">
    <location>
        <position position="117"/>
    </location>
    <ligand>
        <name>substrate</name>
    </ligand>
</feature>
<feature type="binding site" description="axial binding residue" evidence="1">
    <location>
        <position position="240"/>
    </location>
    <ligand>
        <name>heme</name>
        <dbReference type="ChEBI" id="CHEBI:30413"/>
    </ligand>
    <ligandPart>
        <name>Fe</name>
        <dbReference type="ChEBI" id="CHEBI:18248"/>
    </ligandPart>
</feature>
<feature type="binding site" evidence="1">
    <location>
        <position position="254"/>
    </location>
    <ligand>
        <name>substrate</name>
    </ligand>
</feature>
<gene>
    <name evidence="1" type="primary">kynA</name>
    <name type="ordered locus">Arth_1431</name>
</gene>
<keyword id="KW-0223">Dioxygenase</keyword>
<keyword id="KW-0349">Heme</keyword>
<keyword id="KW-0408">Iron</keyword>
<keyword id="KW-0479">Metal-binding</keyword>
<keyword id="KW-0560">Oxidoreductase</keyword>
<keyword id="KW-1185">Reference proteome</keyword>
<keyword id="KW-0823">Tryptophan catabolism</keyword>
<reference key="1">
    <citation type="journal article" date="2013" name="Stand. Genomic Sci.">
        <title>Complete genome sequence of Arthrobacter sp. strain FB24.</title>
        <authorList>
            <person name="Nakatsu C.H."/>
            <person name="Barabote R."/>
            <person name="Thompson S."/>
            <person name="Bruce D."/>
            <person name="Detter C."/>
            <person name="Brettin T."/>
            <person name="Han C."/>
            <person name="Beasley F."/>
            <person name="Chen W."/>
            <person name="Konopka A."/>
            <person name="Xie G."/>
        </authorList>
    </citation>
    <scope>NUCLEOTIDE SEQUENCE [LARGE SCALE GENOMIC DNA]</scope>
    <source>
        <strain>FB24</strain>
    </source>
</reference>
<name>T23O_ARTS2</name>
<sequence>MSVEKNTRQLEKDIVRDFSSRMSYASYLQLPTLLSAQQPVSNPEHHDEMLFIIQHQTTELWLKLVLHELRSAAAWLRSDDLGSALKAIARVKHIQKTLTEQWSVLATLTPTEYSQFRRFLGNSSGFQSSQYRAVEFVLGNKNRKMLPVFESDPEAYQQLSNVLEAPSIYDEFLAYLNRQGFDIPTSLLERDVTKAHQFCPELVPVFKHIYENAADNWGAYEACEELVDLEDNFQLWRFRHLRTVQRTIGMKAGTGGSSGAAFLQKALELTFFPELFAVRTEIGQ</sequence>
<accession>A0JUV5</accession>
<protein>
    <recommendedName>
        <fullName evidence="1">Tryptophan 2,3-dioxygenase</fullName>
        <shortName evidence="1">TDO</shortName>
        <ecNumber evidence="1">1.13.11.11</ecNumber>
    </recommendedName>
    <alternativeName>
        <fullName evidence="1">Tryptamin 2,3-dioxygenase</fullName>
    </alternativeName>
    <alternativeName>
        <fullName evidence="1">Tryptophan oxygenase</fullName>
        <shortName evidence="1">TO</shortName>
        <shortName evidence="1">TRPO</shortName>
    </alternativeName>
    <alternativeName>
        <fullName evidence="1">Tryptophan pyrrolase</fullName>
    </alternativeName>
    <alternativeName>
        <fullName evidence="1">Tryptophanase</fullName>
    </alternativeName>
</protein>
<proteinExistence type="inferred from homology"/>